<sequence length="97" mass="10410">MKIRPLHDRVIVKRKEVESKSAGGIVLTGTAAGKSTRGEVLAVGNGRILDNGEIKPLDVKVGDIVIFNDGYGVKSEKIDHEEVLIMSESDILAIVEA</sequence>
<evidence type="ECO:0000255" key="1">
    <source>
        <dbReference type="HAMAP-Rule" id="MF_00580"/>
    </source>
</evidence>
<comment type="function">
    <text evidence="1">Together with the chaperonin GroEL, plays an essential role in assisting protein folding. The GroEL-GroES system forms a nano-cage that allows encapsulation of the non-native substrate proteins and provides a physical environment optimized to promote and accelerate protein folding. GroES binds to the apical surface of the GroEL ring, thereby capping the opening of the GroEL channel.</text>
</comment>
<comment type="subunit">
    <text evidence="1">Heptamer of 7 subunits arranged in a ring. Interacts with the chaperonin GroEL.</text>
</comment>
<comment type="subcellular location">
    <subcellularLocation>
        <location evidence="1">Cytoplasm</location>
    </subcellularLocation>
</comment>
<comment type="similarity">
    <text evidence="1">Belongs to the GroES chaperonin family.</text>
</comment>
<accession>A1JIP2</accession>
<keyword id="KW-0143">Chaperone</keyword>
<keyword id="KW-0963">Cytoplasm</keyword>
<organism>
    <name type="scientific">Yersinia enterocolitica serotype O:8 / biotype 1B (strain NCTC 13174 / 8081)</name>
    <dbReference type="NCBI Taxonomy" id="393305"/>
    <lineage>
        <taxon>Bacteria</taxon>
        <taxon>Pseudomonadati</taxon>
        <taxon>Pseudomonadota</taxon>
        <taxon>Gammaproteobacteria</taxon>
        <taxon>Enterobacterales</taxon>
        <taxon>Yersiniaceae</taxon>
        <taxon>Yersinia</taxon>
    </lineage>
</organism>
<name>CH10_YERE8</name>
<reference key="1">
    <citation type="journal article" date="2006" name="PLoS Genet.">
        <title>The complete genome sequence and comparative genome analysis of the high pathogenicity Yersinia enterocolitica strain 8081.</title>
        <authorList>
            <person name="Thomson N.R."/>
            <person name="Howard S."/>
            <person name="Wren B.W."/>
            <person name="Holden M.T.G."/>
            <person name="Crossman L."/>
            <person name="Challis G.L."/>
            <person name="Churcher C."/>
            <person name="Mungall K."/>
            <person name="Brooks K."/>
            <person name="Chillingworth T."/>
            <person name="Feltwell T."/>
            <person name="Abdellah Z."/>
            <person name="Hauser H."/>
            <person name="Jagels K."/>
            <person name="Maddison M."/>
            <person name="Moule S."/>
            <person name="Sanders M."/>
            <person name="Whitehead S."/>
            <person name="Quail M.A."/>
            <person name="Dougan G."/>
            <person name="Parkhill J."/>
            <person name="Prentice M.B."/>
        </authorList>
    </citation>
    <scope>NUCLEOTIDE SEQUENCE [LARGE SCALE GENOMIC DNA]</scope>
    <source>
        <strain>NCTC 13174 / 8081</strain>
    </source>
</reference>
<gene>
    <name evidence="1" type="primary">groES</name>
    <name evidence="1" type="synonym">groS</name>
    <name type="ordered locus">YE0353</name>
</gene>
<protein>
    <recommendedName>
        <fullName evidence="1">Co-chaperonin GroES</fullName>
    </recommendedName>
    <alternativeName>
        <fullName evidence="1">10 kDa chaperonin</fullName>
    </alternativeName>
    <alternativeName>
        <fullName evidence="1">Chaperonin-10</fullName>
        <shortName evidence="1">Cpn10</shortName>
    </alternativeName>
</protein>
<dbReference type="EMBL" id="AM286415">
    <property type="protein sequence ID" value="CAL10483.1"/>
    <property type="molecule type" value="Genomic_DNA"/>
</dbReference>
<dbReference type="RefSeq" id="WP_004391824.1">
    <property type="nucleotide sequence ID" value="NC_008800.1"/>
</dbReference>
<dbReference type="RefSeq" id="YP_001004729.1">
    <property type="nucleotide sequence ID" value="NC_008800.1"/>
</dbReference>
<dbReference type="SMR" id="A1JIP2"/>
<dbReference type="KEGG" id="yen:YE0353"/>
<dbReference type="PATRIC" id="fig|393305.7.peg.448"/>
<dbReference type="eggNOG" id="COG0234">
    <property type="taxonomic scope" value="Bacteria"/>
</dbReference>
<dbReference type="HOGENOM" id="CLU_132825_1_1_6"/>
<dbReference type="OrthoDB" id="9806791at2"/>
<dbReference type="Proteomes" id="UP000000642">
    <property type="component" value="Chromosome"/>
</dbReference>
<dbReference type="GO" id="GO:0005737">
    <property type="term" value="C:cytoplasm"/>
    <property type="evidence" value="ECO:0007669"/>
    <property type="project" value="UniProtKB-SubCell"/>
</dbReference>
<dbReference type="GO" id="GO:0005524">
    <property type="term" value="F:ATP binding"/>
    <property type="evidence" value="ECO:0007669"/>
    <property type="project" value="InterPro"/>
</dbReference>
<dbReference type="GO" id="GO:0046872">
    <property type="term" value="F:metal ion binding"/>
    <property type="evidence" value="ECO:0007669"/>
    <property type="project" value="TreeGrafter"/>
</dbReference>
<dbReference type="GO" id="GO:0044183">
    <property type="term" value="F:protein folding chaperone"/>
    <property type="evidence" value="ECO:0007669"/>
    <property type="project" value="InterPro"/>
</dbReference>
<dbReference type="GO" id="GO:0051087">
    <property type="term" value="F:protein-folding chaperone binding"/>
    <property type="evidence" value="ECO:0007669"/>
    <property type="project" value="TreeGrafter"/>
</dbReference>
<dbReference type="GO" id="GO:0051082">
    <property type="term" value="F:unfolded protein binding"/>
    <property type="evidence" value="ECO:0007669"/>
    <property type="project" value="TreeGrafter"/>
</dbReference>
<dbReference type="GO" id="GO:0051085">
    <property type="term" value="P:chaperone cofactor-dependent protein refolding"/>
    <property type="evidence" value="ECO:0007669"/>
    <property type="project" value="TreeGrafter"/>
</dbReference>
<dbReference type="CDD" id="cd00320">
    <property type="entry name" value="cpn10"/>
    <property type="match status" value="1"/>
</dbReference>
<dbReference type="FunFam" id="2.30.33.40:FF:000001">
    <property type="entry name" value="10 kDa chaperonin"/>
    <property type="match status" value="1"/>
</dbReference>
<dbReference type="Gene3D" id="2.30.33.40">
    <property type="entry name" value="GroES chaperonin"/>
    <property type="match status" value="1"/>
</dbReference>
<dbReference type="HAMAP" id="MF_00580">
    <property type="entry name" value="CH10"/>
    <property type="match status" value="1"/>
</dbReference>
<dbReference type="InterPro" id="IPR020818">
    <property type="entry name" value="Chaperonin_GroES"/>
</dbReference>
<dbReference type="InterPro" id="IPR037124">
    <property type="entry name" value="Chaperonin_GroES_sf"/>
</dbReference>
<dbReference type="InterPro" id="IPR018369">
    <property type="entry name" value="Chaprnonin_Cpn10_CS"/>
</dbReference>
<dbReference type="InterPro" id="IPR011032">
    <property type="entry name" value="GroES-like_sf"/>
</dbReference>
<dbReference type="NCBIfam" id="NF001526">
    <property type="entry name" value="PRK00364.1-1"/>
    <property type="match status" value="1"/>
</dbReference>
<dbReference type="NCBIfam" id="NF001527">
    <property type="entry name" value="PRK00364.1-2"/>
    <property type="match status" value="1"/>
</dbReference>
<dbReference type="NCBIfam" id="NF001531">
    <property type="entry name" value="PRK00364.2-2"/>
    <property type="match status" value="1"/>
</dbReference>
<dbReference type="PANTHER" id="PTHR10772">
    <property type="entry name" value="10 KDA HEAT SHOCK PROTEIN"/>
    <property type="match status" value="1"/>
</dbReference>
<dbReference type="PANTHER" id="PTHR10772:SF58">
    <property type="entry name" value="CO-CHAPERONIN GROES"/>
    <property type="match status" value="1"/>
</dbReference>
<dbReference type="Pfam" id="PF00166">
    <property type="entry name" value="Cpn10"/>
    <property type="match status" value="1"/>
</dbReference>
<dbReference type="PRINTS" id="PR00297">
    <property type="entry name" value="CHAPERONIN10"/>
</dbReference>
<dbReference type="SMART" id="SM00883">
    <property type="entry name" value="Cpn10"/>
    <property type="match status" value="1"/>
</dbReference>
<dbReference type="SUPFAM" id="SSF50129">
    <property type="entry name" value="GroES-like"/>
    <property type="match status" value="1"/>
</dbReference>
<dbReference type="PROSITE" id="PS00681">
    <property type="entry name" value="CHAPERONINS_CPN10"/>
    <property type="match status" value="1"/>
</dbReference>
<proteinExistence type="inferred from homology"/>
<feature type="chain" id="PRO_1000025406" description="Co-chaperonin GroES">
    <location>
        <begin position="1"/>
        <end position="97"/>
    </location>
</feature>